<sequence length="66" mass="8114">MDWLAKYWWILVLVFLVGVLLNVIKDLKRIDHKKFLANKPELPPHRDFNDKWDDEEDWPKKDQPKK</sequence>
<name>YPFN_SALDC</name>
<keyword id="KW-1003">Cell membrane</keyword>
<keyword id="KW-0472">Membrane</keyword>
<keyword id="KW-0812">Transmembrane</keyword>
<keyword id="KW-1133">Transmembrane helix</keyword>
<dbReference type="EMBL" id="CP001144">
    <property type="protein sequence ID" value="ACH77217.1"/>
    <property type="molecule type" value="Genomic_DNA"/>
</dbReference>
<dbReference type="RefSeq" id="WP_000383842.1">
    <property type="nucleotide sequence ID" value="NC_011205.1"/>
</dbReference>
<dbReference type="SMR" id="B5FQH4"/>
<dbReference type="KEGG" id="sed:SeD_A2850"/>
<dbReference type="HOGENOM" id="CLU_198936_0_0_6"/>
<dbReference type="Proteomes" id="UP000008322">
    <property type="component" value="Chromosome"/>
</dbReference>
<dbReference type="GO" id="GO:0005886">
    <property type="term" value="C:plasma membrane"/>
    <property type="evidence" value="ECO:0007669"/>
    <property type="project" value="UniProtKB-SubCell"/>
</dbReference>
<dbReference type="HAMAP" id="MF_01566">
    <property type="entry name" value="UPF0370"/>
    <property type="match status" value="1"/>
</dbReference>
<dbReference type="InterPro" id="IPR020910">
    <property type="entry name" value="UPF0370"/>
</dbReference>
<dbReference type="NCBIfam" id="NF010185">
    <property type="entry name" value="PRK13664.1"/>
    <property type="match status" value="1"/>
</dbReference>
<dbReference type="Pfam" id="PF13980">
    <property type="entry name" value="UPF0370"/>
    <property type="match status" value="1"/>
</dbReference>
<accession>B5FQH4</accession>
<protein>
    <recommendedName>
        <fullName evidence="1">UPF0370 protein YpfN</fullName>
    </recommendedName>
</protein>
<reference key="1">
    <citation type="journal article" date="2011" name="J. Bacteriol.">
        <title>Comparative genomics of 28 Salmonella enterica isolates: evidence for CRISPR-mediated adaptive sublineage evolution.</title>
        <authorList>
            <person name="Fricke W.F."/>
            <person name="Mammel M.K."/>
            <person name="McDermott P.F."/>
            <person name="Tartera C."/>
            <person name="White D.G."/>
            <person name="Leclerc J.E."/>
            <person name="Ravel J."/>
            <person name="Cebula T.A."/>
        </authorList>
    </citation>
    <scope>NUCLEOTIDE SEQUENCE [LARGE SCALE GENOMIC DNA]</scope>
    <source>
        <strain>CT_02021853</strain>
    </source>
</reference>
<feature type="chain" id="PRO_1000199728" description="UPF0370 protein YpfN">
    <location>
        <begin position="1"/>
        <end position="66"/>
    </location>
</feature>
<feature type="transmembrane region" description="Helical" evidence="1">
    <location>
        <begin position="4"/>
        <end position="24"/>
    </location>
</feature>
<feature type="region of interest" description="Disordered" evidence="2">
    <location>
        <begin position="39"/>
        <end position="66"/>
    </location>
</feature>
<feature type="compositionally biased region" description="Basic and acidic residues" evidence="2">
    <location>
        <begin position="42"/>
        <end position="51"/>
    </location>
</feature>
<comment type="subcellular location">
    <subcellularLocation>
        <location evidence="1">Cell membrane</location>
        <topology evidence="1">Single-pass membrane protein</topology>
    </subcellularLocation>
</comment>
<comment type="similarity">
    <text evidence="1">Belongs to the UPF0370 family.</text>
</comment>
<gene>
    <name evidence="1" type="primary">ypfN</name>
    <name type="ordered locus">SeD_A2850</name>
</gene>
<proteinExistence type="inferred from homology"/>
<organism>
    <name type="scientific">Salmonella dublin (strain CT_02021853)</name>
    <dbReference type="NCBI Taxonomy" id="439851"/>
    <lineage>
        <taxon>Bacteria</taxon>
        <taxon>Pseudomonadati</taxon>
        <taxon>Pseudomonadota</taxon>
        <taxon>Gammaproteobacteria</taxon>
        <taxon>Enterobacterales</taxon>
        <taxon>Enterobacteriaceae</taxon>
        <taxon>Salmonella</taxon>
    </lineage>
</organism>
<evidence type="ECO:0000255" key="1">
    <source>
        <dbReference type="HAMAP-Rule" id="MF_01566"/>
    </source>
</evidence>
<evidence type="ECO:0000256" key="2">
    <source>
        <dbReference type="SAM" id="MobiDB-lite"/>
    </source>
</evidence>